<keyword id="KW-0002">3D-structure</keyword>
<keyword id="KW-0025">Alternative splicing</keyword>
<keyword id="KW-0597">Phosphoprotein</keyword>
<keyword id="KW-1267">Proteomics identification</keyword>
<keyword id="KW-1185">Reference proteome</keyword>
<keyword id="KW-0694">RNA-binding</keyword>
<proteinExistence type="evidence at protein level"/>
<protein>
    <recommendedName>
        <fullName>RNA-binding protein 41</fullName>
    </recommendedName>
    <alternativeName>
        <fullName>RNA-binding motif protein 41</fullName>
    </alternativeName>
</protein>
<reference key="1">
    <citation type="journal article" date="2004" name="Nat. Genet.">
        <title>Complete sequencing and characterization of 21,243 full-length human cDNAs.</title>
        <authorList>
            <person name="Ota T."/>
            <person name="Suzuki Y."/>
            <person name="Nishikawa T."/>
            <person name="Otsuki T."/>
            <person name="Sugiyama T."/>
            <person name="Irie R."/>
            <person name="Wakamatsu A."/>
            <person name="Hayashi K."/>
            <person name="Sato H."/>
            <person name="Nagai K."/>
            <person name="Kimura K."/>
            <person name="Makita H."/>
            <person name="Sekine M."/>
            <person name="Obayashi M."/>
            <person name="Nishi T."/>
            <person name="Shibahara T."/>
            <person name="Tanaka T."/>
            <person name="Ishii S."/>
            <person name="Yamamoto J."/>
            <person name="Saito K."/>
            <person name="Kawai Y."/>
            <person name="Isono Y."/>
            <person name="Nakamura Y."/>
            <person name="Nagahari K."/>
            <person name="Murakami K."/>
            <person name="Yasuda T."/>
            <person name="Iwayanagi T."/>
            <person name="Wagatsuma M."/>
            <person name="Shiratori A."/>
            <person name="Sudo H."/>
            <person name="Hosoiri T."/>
            <person name="Kaku Y."/>
            <person name="Kodaira H."/>
            <person name="Kondo H."/>
            <person name="Sugawara M."/>
            <person name="Takahashi M."/>
            <person name="Kanda K."/>
            <person name="Yokoi T."/>
            <person name="Furuya T."/>
            <person name="Kikkawa E."/>
            <person name="Omura Y."/>
            <person name="Abe K."/>
            <person name="Kamihara K."/>
            <person name="Katsuta N."/>
            <person name="Sato K."/>
            <person name="Tanikawa M."/>
            <person name="Yamazaki M."/>
            <person name="Ninomiya K."/>
            <person name="Ishibashi T."/>
            <person name="Yamashita H."/>
            <person name="Murakawa K."/>
            <person name="Fujimori K."/>
            <person name="Tanai H."/>
            <person name="Kimata M."/>
            <person name="Watanabe M."/>
            <person name="Hiraoka S."/>
            <person name="Chiba Y."/>
            <person name="Ishida S."/>
            <person name="Ono Y."/>
            <person name="Takiguchi S."/>
            <person name="Watanabe S."/>
            <person name="Yosida M."/>
            <person name="Hotuta T."/>
            <person name="Kusano J."/>
            <person name="Kanehori K."/>
            <person name="Takahashi-Fujii A."/>
            <person name="Hara H."/>
            <person name="Tanase T.-O."/>
            <person name="Nomura Y."/>
            <person name="Togiya S."/>
            <person name="Komai F."/>
            <person name="Hara R."/>
            <person name="Takeuchi K."/>
            <person name="Arita M."/>
            <person name="Imose N."/>
            <person name="Musashino K."/>
            <person name="Yuuki H."/>
            <person name="Oshima A."/>
            <person name="Sasaki N."/>
            <person name="Aotsuka S."/>
            <person name="Yoshikawa Y."/>
            <person name="Matsunawa H."/>
            <person name="Ichihara T."/>
            <person name="Shiohata N."/>
            <person name="Sano S."/>
            <person name="Moriya S."/>
            <person name="Momiyama H."/>
            <person name="Satoh N."/>
            <person name="Takami S."/>
            <person name="Terashima Y."/>
            <person name="Suzuki O."/>
            <person name="Nakagawa S."/>
            <person name="Senoh A."/>
            <person name="Mizoguchi H."/>
            <person name="Goto Y."/>
            <person name="Shimizu F."/>
            <person name="Wakebe H."/>
            <person name="Hishigaki H."/>
            <person name="Watanabe T."/>
            <person name="Sugiyama A."/>
            <person name="Takemoto M."/>
            <person name="Kawakami B."/>
            <person name="Yamazaki M."/>
            <person name="Watanabe K."/>
            <person name="Kumagai A."/>
            <person name="Itakura S."/>
            <person name="Fukuzumi Y."/>
            <person name="Fujimori Y."/>
            <person name="Komiyama M."/>
            <person name="Tashiro H."/>
            <person name="Tanigami A."/>
            <person name="Fujiwara T."/>
            <person name="Ono T."/>
            <person name="Yamada K."/>
            <person name="Fujii Y."/>
            <person name="Ozaki K."/>
            <person name="Hirao M."/>
            <person name="Ohmori Y."/>
            <person name="Kawabata A."/>
            <person name="Hikiji T."/>
            <person name="Kobatake N."/>
            <person name="Inagaki H."/>
            <person name="Ikema Y."/>
            <person name="Okamoto S."/>
            <person name="Okitani R."/>
            <person name="Kawakami T."/>
            <person name="Noguchi S."/>
            <person name="Itoh T."/>
            <person name="Shigeta K."/>
            <person name="Senba T."/>
            <person name="Matsumura K."/>
            <person name="Nakajima Y."/>
            <person name="Mizuno T."/>
            <person name="Morinaga M."/>
            <person name="Sasaki M."/>
            <person name="Togashi T."/>
            <person name="Oyama M."/>
            <person name="Hata H."/>
            <person name="Watanabe M."/>
            <person name="Komatsu T."/>
            <person name="Mizushima-Sugano J."/>
            <person name="Satoh T."/>
            <person name="Shirai Y."/>
            <person name="Takahashi Y."/>
            <person name="Nakagawa K."/>
            <person name="Okumura K."/>
            <person name="Nagase T."/>
            <person name="Nomura N."/>
            <person name="Kikuchi H."/>
            <person name="Masuho Y."/>
            <person name="Yamashita R."/>
            <person name="Nakai K."/>
            <person name="Yada T."/>
            <person name="Nakamura Y."/>
            <person name="Ohara O."/>
            <person name="Isogai T."/>
            <person name="Sugano S."/>
        </authorList>
    </citation>
    <scope>NUCLEOTIDE SEQUENCE [LARGE SCALE MRNA] (ISOFORMS 2 AND 3)</scope>
    <source>
        <tissue>Placenta</tissue>
    </source>
</reference>
<reference key="2">
    <citation type="journal article" date="2005" name="Nature">
        <title>The DNA sequence of the human X chromosome.</title>
        <authorList>
            <person name="Ross M.T."/>
            <person name="Grafham D.V."/>
            <person name="Coffey A.J."/>
            <person name="Scherer S."/>
            <person name="McLay K."/>
            <person name="Muzny D."/>
            <person name="Platzer M."/>
            <person name="Howell G.R."/>
            <person name="Burrows C."/>
            <person name="Bird C.P."/>
            <person name="Frankish A."/>
            <person name="Lovell F.L."/>
            <person name="Howe K.L."/>
            <person name="Ashurst J.L."/>
            <person name="Fulton R.S."/>
            <person name="Sudbrak R."/>
            <person name="Wen G."/>
            <person name="Jones M.C."/>
            <person name="Hurles M.E."/>
            <person name="Andrews T.D."/>
            <person name="Scott C.E."/>
            <person name="Searle S."/>
            <person name="Ramser J."/>
            <person name="Whittaker A."/>
            <person name="Deadman R."/>
            <person name="Carter N.P."/>
            <person name="Hunt S.E."/>
            <person name="Chen R."/>
            <person name="Cree A."/>
            <person name="Gunaratne P."/>
            <person name="Havlak P."/>
            <person name="Hodgson A."/>
            <person name="Metzker M.L."/>
            <person name="Richards S."/>
            <person name="Scott G."/>
            <person name="Steffen D."/>
            <person name="Sodergren E."/>
            <person name="Wheeler D.A."/>
            <person name="Worley K.C."/>
            <person name="Ainscough R."/>
            <person name="Ambrose K.D."/>
            <person name="Ansari-Lari M.A."/>
            <person name="Aradhya S."/>
            <person name="Ashwell R.I."/>
            <person name="Babbage A.K."/>
            <person name="Bagguley C.L."/>
            <person name="Ballabio A."/>
            <person name="Banerjee R."/>
            <person name="Barker G.E."/>
            <person name="Barlow K.F."/>
            <person name="Barrett I.P."/>
            <person name="Bates K.N."/>
            <person name="Beare D.M."/>
            <person name="Beasley H."/>
            <person name="Beasley O."/>
            <person name="Beck A."/>
            <person name="Bethel G."/>
            <person name="Blechschmidt K."/>
            <person name="Brady N."/>
            <person name="Bray-Allen S."/>
            <person name="Bridgeman A.M."/>
            <person name="Brown A.J."/>
            <person name="Brown M.J."/>
            <person name="Bonnin D."/>
            <person name="Bruford E.A."/>
            <person name="Buhay C."/>
            <person name="Burch P."/>
            <person name="Burford D."/>
            <person name="Burgess J."/>
            <person name="Burrill W."/>
            <person name="Burton J."/>
            <person name="Bye J.M."/>
            <person name="Carder C."/>
            <person name="Carrel L."/>
            <person name="Chako J."/>
            <person name="Chapman J.C."/>
            <person name="Chavez D."/>
            <person name="Chen E."/>
            <person name="Chen G."/>
            <person name="Chen Y."/>
            <person name="Chen Z."/>
            <person name="Chinault C."/>
            <person name="Ciccodicola A."/>
            <person name="Clark S.Y."/>
            <person name="Clarke G."/>
            <person name="Clee C.M."/>
            <person name="Clegg S."/>
            <person name="Clerc-Blankenburg K."/>
            <person name="Clifford K."/>
            <person name="Cobley V."/>
            <person name="Cole C.G."/>
            <person name="Conquer J.S."/>
            <person name="Corby N."/>
            <person name="Connor R.E."/>
            <person name="David R."/>
            <person name="Davies J."/>
            <person name="Davis C."/>
            <person name="Davis J."/>
            <person name="Delgado O."/>
            <person name="Deshazo D."/>
            <person name="Dhami P."/>
            <person name="Ding Y."/>
            <person name="Dinh H."/>
            <person name="Dodsworth S."/>
            <person name="Draper H."/>
            <person name="Dugan-Rocha S."/>
            <person name="Dunham A."/>
            <person name="Dunn M."/>
            <person name="Durbin K.J."/>
            <person name="Dutta I."/>
            <person name="Eades T."/>
            <person name="Ellwood M."/>
            <person name="Emery-Cohen A."/>
            <person name="Errington H."/>
            <person name="Evans K.L."/>
            <person name="Faulkner L."/>
            <person name="Francis F."/>
            <person name="Frankland J."/>
            <person name="Fraser A.E."/>
            <person name="Galgoczy P."/>
            <person name="Gilbert J."/>
            <person name="Gill R."/>
            <person name="Gloeckner G."/>
            <person name="Gregory S.G."/>
            <person name="Gribble S."/>
            <person name="Griffiths C."/>
            <person name="Grocock R."/>
            <person name="Gu Y."/>
            <person name="Gwilliam R."/>
            <person name="Hamilton C."/>
            <person name="Hart E.A."/>
            <person name="Hawes A."/>
            <person name="Heath P.D."/>
            <person name="Heitmann K."/>
            <person name="Hennig S."/>
            <person name="Hernandez J."/>
            <person name="Hinzmann B."/>
            <person name="Ho S."/>
            <person name="Hoffs M."/>
            <person name="Howden P.J."/>
            <person name="Huckle E.J."/>
            <person name="Hume J."/>
            <person name="Hunt P.J."/>
            <person name="Hunt A.R."/>
            <person name="Isherwood J."/>
            <person name="Jacob L."/>
            <person name="Johnson D."/>
            <person name="Jones S."/>
            <person name="de Jong P.J."/>
            <person name="Joseph S.S."/>
            <person name="Keenan S."/>
            <person name="Kelly S."/>
            <person name="Kershaw J.K."/>
            <person name="Khan Z."/>
            <person name="Kioschis P."/>
            <person name="Klages S."/>
            <person name="Knights A.J."/>
            <person name="Kosiura A."/>
            <person name="Kovar-Smith C."/>
            <person name="Laird G.K."/>
            <person name="Langford C."/>
            <person name="Lawlor S."/>
            <person name="Leversha M."/>
            <person name="Lewis L."/>
            <person name="Liu W."/>
            <person name="Lloyd C."/>
            <person name="Lloyd D.M."/>
            <person name="Loulseged H."/>
            <person name="Loveland J.E."/>
            <person name="Lovell J.D."/>
            <person name="Lozado R."/>
            <person name="Lu J."/>
            <person name="Lyne R."/>
            <person name="Ma J."/>
            <person name="Maheshwari M."/>
            <person name="Matthews L.H."/>
            <person name="McDowall J."/>
            <person name="McLaren S."/>
            <person name="McMurray A."/>
            <person name="Meidl P."/>
            <person name="Meitinger T."/>
            <person name="Milne S."/>
            <person name="Miner G."/>
            <person name="Mistry S.L."/>
            <person name="Morgan M."/>
            <person name="Morris S."/>
            <person name="Mueller I."/>
            <person name="Mullikin J.C."/>
            <person name="Nguyen N."/>
            <person name="Nordsiek G."/>
            <person name="Nyakatura G."/>
            <person name="O'dell C.N."/>
            <person name="Okwuonu G."/>
            <person name="Palmer S."/>
            <person name="Pandian R."/>
            <person name="Parker D."/>
            <person name="Parrish J."/>
            <person name="Pasternak S."/>
            <person name="Patel D."/>
            <person name="Pearce A.V."/>
            <person name="Pearson D.M."/>
            <person name="Pelan S.E."/>
            <person name="Perez L."/>
            <person name="Porter K.M."/>
            <person name="Ramsey Y."/>
            <person name="Reichwald K."/>
            <person name="Rhodes S."/>
            <person name="Ridler K.A."/>
            <person name="Schlessinger D."/>
            <person name="Schueler M.G."/>
            <person name="Sehra H.K."/>
            <person name="Shaw-Smith C."/>
            <person name="Shen H."/>
            <person name="Sheridan E.M."/>
            <person name="Shownkeen R."/>
            <person name="Skuce C.D."/>
            <person name="Smith M.L."/>
            <person name="Sotheran E.C."/>
            <person name="Steingruber H.E."/>
            <person name="Steward C.A."/>
            <person name="Storey R."/>
            <person name="Swann R.M."/>
            <person name="Swarbreck D."/>
            <person name="Tabor P.E."/>
            <person name="Taudien S."/>
            <person name="Taylor T."/>
            <person name="Teague B."/>
            <person name="Thomas K."/>
            <person name="Thorpe A."/>
            <person name="Timms K."/>
            <person name="Tracey A."/>
            <person name="Trevanion S."/>
            <person name="Tromans A.C."/>
            <person name="d'Urso M."/>
            <person name="Verduzco D."/>
            <person name="Villasana D."/>
            <person name="Waldron L."/>
            <person name="Wall M."/>
            <person name="Wang Q."/>
            <person name="Warren J."/>
            <person name="Warry G.L."/>
            <person name="Wei X."/>
            <person name="West A."/>
            <person name="Whitehead S.L."/>
            <person name="Whiteley M.N."/>
            <person name="Wilkinson J.E."/>
            <person name="Willey D.L."/>
            <person name="Williams G."/>
            <person name="Williams L."/>
            <person name="Williamson A."/>
            <person name="Williamson H."/>
            <person name="Wilming L."/>
            <person name="Woodmansey R.L."/>
            <person name="Wray P.W."/>
            <person name="Yen J."/>
            <person name="Zhang J."/>
            <person name="Zhou J."/>
            <person name="Zoghbi H."/>
            <person name="Zorilla S."/>
            <person name="Buck D."/>
            <person name="Reinhardt R."/>
            <person name="Poustka A."/>
            <person name="Rosenthal A."/>
            <person name="Lehrach H."/>
            <person name="Meindl A."/>
            <person name="Minx P.J."/>
            <person name="Hillier L.W."/>
            <person name="Willard H.F."/>
            <person name="Wilson R.K."/>
            <person name="Waterston R.H."/>
            <person name="Rice C.M."/>
            <person name="Vaudin M."/>
            <person name="Coulson A."/>
            <person name="Nelson D.L."/>
            <person name="Weinstock G."/>
            <person name="Sulston J.E."/>
            <person name="Durbin R.M."/>
            <person name="Hubbard T."/>
            <person name="Gibbs R.A."/>
            <person name="Beck S."/>
            <person name="Rogers J."/>
            <person name="Bentley D.R."/>
        </authorList>
    </citation>
    <scope>NUCLEOTIDE SEQUENCE [LARGE SCALE GENOMIC DNA]</scope>
</reference>
<reference key="3">
    <citation type="journal article" date="2004" name="Genome Res.">
        <title>The status, quality, and expansion of the NIH full-length cDNA project: the Mammalian Gene Collection (MGC).</title>
        <authorList>
            <consortium name="The MGC Project Team"/>
        </authorList>
    </citation>
    <scope>NUCLEOTIDE SEQUENCE [LARGE SCALE MRNA] (ISOFORM 1)</scope>
    <scope>VARIANT TYR-376</scope>
    <source>
        <tissue>Urinary bladder</tissue>
    </source>
</reference>
<reference key="4">
    <citation type="journal article" date="2008" name="Proc. Natl. Acad. Sci. U.S.A.">
        <title>A quantitative atlas of mitotic phosphorylation.</title>
        <authorList>
            <person name="Dephoure N."/>
            <person name="Zhou C."/>
            <person name="Villen J."/>
            <person name="Beausoleil S.A."/>
            <person name="Bakalarski C.E."/>
            <person name="Elledge S.J."/>
            <person name="Gygi S.P."/>
        </authorList>
    </citation>
    <scope>PHOSPHORYLATION [LARGE SCALE ANALYSIS] AT SER-232</scope>
    <scope>IDENTIFICATION BY MASS SPECTROMETRY [LARGE SCALE ANALYSIS]</scope>
    <source>
        <tissue>Cervix carcinoma</tissue>
    </source>
</reference>
<reference key="5">
    <citation type="submission" date="2005-11" db="PDB data bank">
        <title>Solution structure of RNA binding domain in hypothetical protein FLJ11016.</title>
        <authorList>
            <consortium name="RIKEN structural genomics initiative (RSGI)"/>
        </authorList>
    </citation>
    <scope>STRUCTURE BY NMR OF 291-392</scope>
</reference>
<evidence type="ECO:0000255" key="1">
    <source>
        <dbReference type="PROSITE-ProRule" id="PRU00176"/>
    </source>
</evidence>
<evidence type="ECO:0000256" key="2">
    <source>
        <dbReference type="SAM" id="MobiDB-lite"/>
    </source>
</evidence>
<evidence type="ECO:0000269" key="3">
    <source>
    </source>
</evidence>
<evidence type="ECO:0000303" key="4">
    <source>
    </source>
</evidence>
<evidence type="ECO:0000305" key="5"/>
<evidence type="ECO:0007744" key="6">
    <source>
    </source>
</evidence>
<evidence type="ECO:0007829" key="7">
    <source>
        <dbReference type="PDB" id="2CPX"/>
    </source>
</evidence>
<comment type="function">
    <text evidence="5">May bind RNA.</text>
</comment>
<comment type="interaction">
    <interactant intactId="EBI-740773">
        <id>Q96IZ5</id>
    </interactant>
    <interactant intactId="EBI-11975051">
        <id>Q8TD16-2</id>
        <label>BICD2</label>
    </interactant>
    <organismsDiffer>false</organismsDiffer>
    <experiments>3</experiments>
</comment>
<comment type="interaction">
    <interactant intactId="EBI-740773">
        <id>Q96IZ5</id>
    </interactant>
    <interactant intactId="EBI-10175300">
        <id>Q8TD31-3</id>
        <label>CCHCR1</label>
    </interactant>
    <organismsDiffer>false</organismsDiffer>
    <experiments>3</experiments>
</comment>
<comment type="interaction">
    <interactant intactId="EBI-740773">
        <id>Q96IZ5</id>
    </interactant>
    <interactant intactId="EBI-395261">
        <id>P24863</id>
        <label>CCNC</label>
    </interactant>
    <organismsDiffer>false</organismsDiffer>
    <experiments>3</experiments>
</comment>
<comment type="interaction">
    <interactant intactId="EBI-740773">
        <id>Q96IZ5</id>
    </interactant>
    <interactant intactId="EBI-742887">
        <id>Q8TAP6</id>
        <label>CEP76</label>
    </interactant>
    <organismsDiffer>false</organismsDiffer>
    <experiments>3</experiments>
</comment>
<comment type="interaction">
    <interactant intactId="EBI-740773">
        <id>Q96IZ5</id>
    </interactant>
    <interactant intactId="EBI-11988027">
        <id>Q9NRI5-2</id>
        <label>DISC1</label>
    </interactant>
    <organismsDiffer>false</organismsDiffer>
    <experiments>3</experiments>
</comment>
<comment type="interaction">
    <interactant intactId="EBI-740773">
        <id>Q96IZ5</id>
    </interactant>
    <interactant intactId="EBI-618309">
        <id>Q08379</id>
        <label>GOLGA2</label>
    </interactant>
    <organismsDiffer>false</organismsDiffer>
    <experiments>6</experiments>
</comment>
<comment type="interaction">
    <interactant intactId="EBI-740773">
        <id>Q96IZ5</id>
    </interactant>
    <interactant intactId="EBI-357966">
        <id>P07910</id>
        <label>HNRNPC</label>
    </interactant>
    <organismsDiffer>false</organismsDiffer>
    <experiments>5</experiments>
</comment>
<comment type="interaction">
    <interactant intactId="EBI-740773">
        <id>Q96IZ5</id>
    </interactant>
    <interactant intactId="EBI-10961706">
        <id>Q96ED9-2</id>
        <label>HOOK2</label>
    </interactant>
    <organismsDiffer>false</organismsDiffer>
    <experiments>3</experiments>
</comment>
<comment type="interaction">
    <interactant intactId="EBI-740773">
        <id>Q96IZ5</id>
    </interactant>
    <interactant intactId="EBI-7116203">
        <id>O75031</id>
        <label>HSF2BP</label>
    </interactant>
    <organismsDiffer>false</organismsDiffer>
    <experiments>3</experiments>
</comment>
<comment type="interaction">
    <interactant intactId="EBI-740773">
        <id>Q96IZ5</id>
    </interactant>
    <interactant intactId="EBI-14069005">
        <id>Q9BVG8-5</id>
        <label>KIFC3</label>
    </interactant>
    <organismsDiffer>false</organismsDiffer>
    <experiments>3</experiments>
</comment>
<comment type="interaction">
    <interactant intactId="EBI-740773">
        <id>Q96IZ5</id>
    </interactant>
    <interactant intactId="EBI-3044087">
        <id>Q7Z3Y8</id>
        <label>KRT27</label>
    </interactant>
    <organismsDiffer>false</organismsDiffer>
    <experiments>3</experiments>
</comment>
<comment type="interaction">
    <interactant intactId="EBI-740773">
        <id>Q96IZ5</id>
    </interactant>
    <interactant intactId="EBI-10171697">
        <id>Q6A162</id>
        <label>KRT40</label>
    </interactant>
    <organismsDiffer>false</organismsDiffer>
    <experiments>3</experiments>
</comment>
<comment type="interaction">
    <interactant intactId="EBI-740773">
        <id>Q96IZ5</id>
    </interactant>
    <interactant intactId="EBI-741037">
        <id>Q9BRK4</id>
        <label>LZTS2</label>
    </interactant>
    <organismsDiffer>false</organismsDiffer>
    <experiments>3</experiments>
</comment>
<comment type="interaction">
    <interactant intactId="EBI-740773">
        <id>Q96IZ5</id>
    </interactant>
    <interactant intactId="EBI-2864512">
        <id>P50221</id>
        <label>MEOX1</label>
    </interactant>
    <organismsDiffer>false</organismsDiffer>
    <experiments>3</experiments>
</comment>
<comment type="interaction">
    <interactant intactId="EBI-740773">
        <id>Q96IZ5</id>
    </interactant>
    <interactant intactId="EBI-2548751">
        <id>Q8TD10</id>
        <label>MIPOL1</label>
    </interactant>
    <organismsDiffer>false</organismsDiffer>
    <experiments>3</experiments>
</comment>
<comment type="interaction">
    <interactant intactId="EBI-740773">
        <id>Q96IZ5</id>
    </interactant>
    <interactant intactId="EBI-2340269">
        <id>Q13064</id>
        <label>MKRN3</label>
    </interactant>
    <organismsDiffer>false</organismsDiffer>
    <experiments>3</experiments>
</comment>
<comment type="interaction">
    <interactant intactId="EBI-740773">
        <id>Q96IZ5</id>
    </interactant>
    <interactant intactId="EBI-11522433">
        <id>Q5JR59-3</id>
        <label>MTUS2</label>
    </interactant>
    <organismsDiffer>false</organismsDiffer>
    <experiments>3</experiments>
</comment>
<comment type="interaction">
    <interactant intactId="EBI-740773">
        <id>Q96IZ5</id>
    </interactant>
    <interactant intactId="EBI-10271199">
        <id>Q8NI38</id>
        <label>NFKBID</label>
    </interactant>
    <organismsDiffer>false</organismsDiffer>
    <experiments>3</experiments>
</comment>
<comment type="interaction">
    <interactant intactId="EBI-740773">
        <id>Q96IZ5</id>
    </interactant>
    <interactant intactId="EBI-719716">
        <id>Q9Y2I6</id>
        <label>NINL</label>
    </interactant>
    <organismsDiffer>false</organismsDiffer>
    <experiments>3</experiments>
</comment>
<comment type="interaction">
    <interactant intactId="EBI-740773">
        <id>Q96IZ5</id>
    </interactant>
    <interactant intactId="EBI-302345">
        <id>Q8ND90</id>
        <label>PNMA1</label>
    </interactant>
    <organismsDiffer>false</organismsDiffer>
    <experiments>3</experiments>
</comment>
<comment type="interaction">
    <interactant intactId="EBI-740773">
        <id>Q96IZ5</id>
    </interactant>
    <interactant intactId="EBI-741520">
        <id>Q86SE5</id>
        <label>RALYL</label>
    </interactant>
    <organismsDiffer>false</organismsDiffer>
    <experiments>4</experiments>
</comment>
<comment type="interaction">
    <interactant intactId="EBI-740773">
        <id>Q96IZ5</id>
    </interactant>
    <interactant intactId="EBI-11987469">
        <id>Q6ZRY4</id>
        <label>RBPMS2</label>
    </interactant>
    <organismsDiffer>false</organismsDiffer>
    <experiments>3</experiments>
</comment>
<comment type="interaction">
    <interactant intactId="EBI-740773">
        <id>Q96IZ5</id>
    </interactant>
    <interactant intactId="EBI-726876">
        <id>Q6NUQ1</id>
        <label>RINT1</label>
    </interactant>
    <organismsDiffer>false</organismsDiffer>
    <experiments>6</experiments>
</comment>
<comment type="interaction">
    <interactant intactId="EBI-740773">
        <id>Q96IZ5</id>
    </interactant>
    <interactant intactId="EBI-413317">
        <id>Q96R06</id>
        <label>SPAG5</label>
    </interactant>
    <organismsDiffer>false</organismsDiffer>
    <experiments>3</experiments>
</comment>
<comment type="interaction">
    <interactant intactId="EBI-740773">
        <id>Q96IZ5</id>
    </interactant>
    <interactant intactId="EBI-12027348">
        <id>O43548</id>
        <label>TGM5</label>
    </interactant>
    <organismsDiffer>false</organismsDiffer>
    <experiments>3</experiments>
</comment>
<comment type="interaction">
    <interactant intactId="EBI-740773">
        <id>Q96IZ5</id>
    </interactant>
    <interactant intactId="EBI-359224">
        <id>Q13077</id>
        <label>TRAF1</label>
    </interactant>
    <organismsDiffer>false</organismsDiffer>
    <experiments>3</experiments>
</comment>
<comment type="interaction">
    <interactant intactId="EBI-740773">
        <id>Q96IZ5</id>
    </interactant>
    <interactant intactId="EBI-355744">
        <id>Q12933</id>
        <label>TRAF2</label>
    </interactant>
    <organismsDiffer>false</organismsDiffer>
    <experiments>6</experiments>
</comment>
<comment type="interaction">
    <interactant intactId="EBI-740773">
        <id>Q96IZ5</id>
    </interactant>
    <interactant intactId="EBI-719493">
        <id>P14373</id>
        <label>TRIM27</label>
    </interactant>
    <organismsDiffer>false</organismsDiffer>
    <experiments>3</experiments>
</comment>
<comment type="interaction">
    <interactant intactId="EBI-740773">
        <id>Q96IZ5</id>
    </interactant>
    <interactant intactId="EBI-2130429">
        <id>Q9BYV2</id>
        <label>TRIM54</label>
    </interactant>
    <organismsDiffer>false</organismsDiffer>
    <experiments>3</experiments>
</comment>
<comment type="interaction">
    <interactant intactId="EBI-740773">
        <id>Q96IZ5</id>
    </interactant>
    <interactant intactId="EBI-12017160">
        <id>Q96DT7-3</id>
        <label>ZBTB10</label>
    </interactant>
    <organismsDiffer>false</organismsDiffer>
    <experiments>3</experiments>
</comment>
<comment type="interaction">
    <interactant intactId="EBI-740773">
        <id>Q96IZ5</id>
    </interactant>
    <interactant intactId="EBI-25475885">
        <id>PRO_0000449629</id>
        <label>rep</label>
        <dbReference type="UniProtKB" id="P0DTD1"/>
    </interactant>
    <organismsDiffer>true</organismsDiffer>
    <experiments>3</experiments>
</comment>
<comment type="alternative products">
    <event type="alternative splicing"/>
    <isoform>
        <id>Q96IZ5-1</id>
        <name>1</name>
        <sequence type="displayed"/>
    </isoform>
    <isoform>
        <id>Q96IZ5-2</id>
        <name>2</name>
        <sequence type="described" ref="VSP_021349"/>
    </isoform>
    <isoform>
        <id>Q96IZ5-3</id>
        <name>3</name>
        <sequence type="described" ref="VSP_021346 VSP_021347 VSP_021348"/>
    </isoform>
</comment>
<name>RBM41_HUMAN</name>
<dbReference type="EMBL" id="AK001878">
    <property type="protein sequence ID" value="BAA91957.1"/>
    <property type="molecule type" value="mRNA"/>
</dbReference>
<dbReference type="EMBL" id="AK023732">
    <property type="protein sequence ID" value="BAB14660.1"/>
    <property type="molecule type" value="mRNA"/>
</dbReference>
<dbReference type="EMBL" id="AL390039">
    <property type="status" value="NOT_ANNOTATED_CDS"/>
    <property type="molecule type" value="Genomic_DNA"/>
</dbReference>
<dbReference type="EMBL" id="BC006986">
    <property type="protein sequence ID" value="AAH06986.1"/>
    <property type="molecule type" value="mRNA"/>
</dbReference>
<dbReference type="CCDS" id="CCDS14526.1">
    <molecule id="Q96IZ5-1"/>
</dbReference>
<dbReference type="CCDS" id="CCDS55472.1">
    <molecule id="Q96IZ5-2"/>
</dbReference>
<dbReference type="RefSeq" id="NP_001164551.1">
    <molecule id="Q96IZ5-2"/>
    <property type="nucleotide sequence ID" value="NM_001171080.2"/>
</dbReference>
<dbReference type="RefSeq" id="NP_060771.3">
    <molecule id="Q96IZ5-1"/>
    <property type="nucleotide sequence ID" value="NM_018301.4"/>
</dbReference>
<dbReference type="PDB" id="2CPX">
    <property type="method" value="NMR"/>
    <property type="chains" value="A=291-392"/>
</dbReference>
<dbReference type="PDBsum" id="2CPX"/>
<dbReference type="SMR" id="Q96IZ5"/>
<dbReference type="BioGRID" id="120573">
    <property type="interactions" value="45"/>
</dbReference>
<dbReference type="FunCoup" id="Q96IZ5">
    <property type="interactions" value="866"/>
</dbReference>
<dbReference type="IntAct" id="Q96IZ5">
    <property type="interactions" value="36"/>
</dbReference>
<dbReference type="MINT" id="Q96IZ5"/>
<dbReference type="STRING" id="9606.ENSP00000361557"/>
<dbReference type="GlyGen" id="Q96IZ5">
    <property type="glycosylation" value="2 sites, 1 O-linked glycan (2 sites)"/>
</dbReference>
<dbReference type="iPTMnet" id="Q96IZ5"/>
<dbReference type="PhosphoSitePlus" id="Q96IZ5"/>
<dbReference type="BioMuta" id="RBM41"/>
<dbReference type="DMDM" id="117949772"/>
<dbReference type="jPOST" id="Q96IZ5"/>
<dbReference type="MassIVE" id="Q96IZ5"/>
<dbReference type="PaxDb" id="9606-ENSP00000361557"/>
<dbReference type="PeptideAtlas" id="Q96IZ5"/>
<dbReference type="ProteomicsDB" id="76874">
    <molecule id="Q96IZ5-1"/>
</dbReference>
<dbReference type="ProteomicsDB" id="76875">
    <molecule id="Q96IZ5-2"/>
</dbReference>
<dbReference type="ProteomicsDB" id="76876">
    <molecule id="Q96IZ5-3"/>
</dbReference>
<dbReference type="Pumba" id="Q96IZ5"/>
<dbReference type="Antibodypedia" id="29287">
    <property type="antibodies" value="135 antibodies from 19 providers"/>
</dbReference>
<dbReference type="DNASU" id="55285"/>
<dbReference type="Ensembl" id="ENST00000372479.8">
    <molecule id="Q96IZ5-1"/>
    <property type="protein sequence ID" value="ENSP00000361557.3"/>
    <property type="gene ID" value="ENSG00000089682.18"/>
</dbReference>
<dbReference type="Ensembl" id="ENST00000372487.5">
    <molecule id="Q96IZ5-2"/>
    <property type="protein sequence ID" value="ENSP00000361565.1"/>
    <property type="gene ID" value="ENSG00000089682.18"/>
</dbReference>
<dbReference type="Ensembl" id="ENST00000495517.5">
    <molecule id="Q96IZ5-3"/>
    <property type="protein sequence ID" value="ENSP00000433251.1"/>
    <property type="gene ID" value="ENSG00000089682.18"/>
</dbReference>
<dbReference type="GeneID" id="55285"/>
<dbReference type="KEGG" id="hsa:55285"/>
<dbReference type="UCSC" id="uc004emy.3">
    <molecule id="Q96IZ5-1"/>
    <property type="organism name" value="human"/>
</dbReference>
<dbReference type="AGR" id="HGNC:25617"/>
<dbReference type="CTD" id="55285"/>
<dbReference type="GeneCards" id="RBM41"/>
<dbReference type="HGNC" id="HGNC:25617">
    <property type="gene designation" value="RBM41"/>
</dbReference>
<dbReference type="HPA" id="ENSG00000089682">
    <property type="expression patterns" value="Low tissue specificity"/>
</dbReference>
<dbReference type="neXtProt" id="NX_Q96IZ5"/>
<dbReference type="OpenTargets" id="ENSG00000089682"/>
<dbReference type="PharmGKB" id="PA145148155"/>
<dbReference type="VEuPathDB" id="HostDB:ENSG00000089682"/>
<dbReference type="eggNOG" id="ENOG502RIV3">
    <property type="taxonomic scope" value="Eukaryota"/>
</dbReference>
<dbReference type="GeneTree" id="ENSGT00530000063786"/>
<dbReference type="HOGENOM" id="CLU_054957_0_0_1"/>
<dbReference type="InParanoid" id="Q96IZ5"/>
<dbReference type="OMA" id="ELMALFC"/>
<dbReference type="OrthoDB" id="277802at2759"/>
<dbReference type="PAN-GO" id="Q96IZ5">
    <property type="GO annotations" value="4 GO annotations based on evolutionary models"/>
</dbReference>
<dbReference type="PhylomeDB" id="Q96IZ5"/>
<dbReference type="TreeFam" id="TF324298"/>
<dbReference type="PathwayCommons" id="Q96IZ5"/>
<dbReference type="SignaLink" id="Q96IZ5"/>
<dbReference type="BioGRID-ORCS" id="55285">
    <property type="hits" value="11 hits in 783 CRISPR screens"/>
</dbReference>
<dbReference type="ChiTaRS" id="RBM41">
    <property type="organism name" value="human"/>
</dbReference>
<dbReference type="EvolutionaryTrace" id="Q96IZ5"/>
<dbReference type="GenomeRNAi" id="55285"/>
<dbReference type="Pharos" id="Q96IZ5">
    <property type="development level" value="Tdark"/>
</dbReference>
<dbReference type="PRO" id="PR:Q96IZ5"/>
<dbReference type="Proteomes" id="UP000005640">
    <property type="component" value="Chromosome X"/>
</dbReference>
<dbReference type="RNAct" id="Q96IZ5">
    <property type="molecule type" value="protein"/>
</dbReference>
<dbReference type="Bgee" id="ENSG00000089682">
    <property type="expression patterns" value="Expressed in calcaneal tendon and 194 other cell types or tissues"/>
</dbReference>
<dbReference type="ExpressionAtlas" id="Q96IZ5">
    <property type="expression patterns" value="baseline and differential"/>
</dbReference>
<dbReference type="GO" id="GO:0005689">
    <property type="term" value="C:U12-type spliceosomal complex"/>
    <property type="evidence" value="ECO:0000318"/>
    <property type="project" value="GO_Central"/>
</dbReference>
<dbReference type="GO" id="GO:0097157">
    <property type="term" value="F:pre-mRNA intronic binding"/>
    <property type="evidence" value="ECO:0000318"/>
    <property type="project" value="GO_Central"/>
</dbReference>
<dbReference type="GO" id="GO:0030626">
    <property type="term" value="F:U12 snRNA binding"/>
    <property type="evidence" value="ECO:0000318"/>
    <property type="project" value="GO_Central"/>
</dbReference>
<dbReference type="GO" id="GO:0000398">
    <property type="term" value="P:mRNA splicing, via spliceosome"/>
    <property type="evidence" value="ECO:0000318"/>
    <property type="project" value="GO_Central"/>
</dbReference>
<dbReference type="CDD" id="cd12239">
    <property type="entry name" value="RRM2_RBM40_like"/>
    <property type="match status" value="1"/>
</dbReference>
<dbReference type="FunFam" id="3.30.70.330:FF:000252">
    <property type="entry name" value="RNA binding motif protein 41"/>
    <property type="match status" value="1"/>
</dbReference>
<dbReference type="Gene3D" id="3.30.70.330">
    <property type="match status" value="1"/>
</dbReference>
<dbReference type="InterPro" id="IPR012677">
    <property type="entry name" value="Nucleotide-bd_a/b_plait_sf"/>
</dbReference>
<dbReference type="InterPro" id="IPR035979">
    <property type="entry name" value="RBD_domain_sf"/>
</dbReference>
<dbReference type="InterPro" id="IPR045164">
    <property type="entry name" value="RBM41/RNPC3"/>
</dbReference>
<dbReference type="InterPro" id="IPR000504">
    <property type="entry name" value="RRM_dom"/>
</dbReference>
<dbReference type="PANTHER" id="PTHR16105:SF2">
    <property type="entry name" value="RNA-BINDING PROTEIN 41"/>
    <property type="match status" value="1"/>
</dbReference>
<dbReference type="PANTHER" id="PTHR16105">
    <property type="entry name" value="RNA-BINDING REGION-CONTAINING PROTEIN 3"/>
    <property type="match status" value="1"/>
</dbReference>
<dbReference type="Pfam" id="PF00076">
    <property type="entry name" value="RRM_1"/>
    <property type="match status" value="1"/>
</dbReference>
<dbReference type="SMART" id="SM00360">
    <property type="entry name" value="RRM"/>
    <property type="match status" value="1"/>
</dbReference>
<dbReference type="SUPFAM" id="SSF54928">
    <property type="entry name" value="RNA-binding domain, RBD"/>
    <property type="match status" value="1"/>
</dbReference>
<dbReference type="PROSITE" id="PS50102">
    <property type="entry name" value="RRM"/>
    <property type="match status" value="1"/>
</dbReference>
<accession>Q96IZ5</accession>
<accession>Q5JSN7</accession>
<accession>Q5JSN8</accession>
<accession>Q9H8F7</accession>
<accession>Q9NV04</accession>
<organism>
    <name type="scientific">Homo sapiens</name>
    <name type="common">Human</name>
    <dbReference type="NCBI Taxonomy" id="9606"/>
    <lineage>
        <taxon>Eukaryota</taxon>
        <taxon>Metazoa</taxon>
        <taxon>Chordata</taxon>
        <taxon>Craniata</taxon>
        <taxon>Vertebrata</taxon>
        <taxon>Euteleostomi</taxon>
        <taxon>Mammalia</taxon>
        <taxon>Eutheria</taxon>
        <taxon>Euarchontoglires</taxon>
        <taxon>Primates</taxon>
        <taxon>Haplorrhini</taxon>
        <taxon>Catarrhini</taxon>
        <taxon>Hominidae</taxon>
        <taxon>Homo</taxon>
    </lineage>
</organism>
<sequence length="413" mass="47100">MKRVNSCVKSDEHVLEELETEGERQLKSLLQHQLDTSVSIEECMSKKESFAPGTMYKPFGKEAAGTMTLSQFQTLHEKDQETASLRELGLNETEILIWKSHVSGEKKTKLRATPEAIQNRLQDIEERISERQRILCLPQRFAKSKQLTRREMEIEKSLFQGADRHSFLKALYYQDEPQKKNKGDPMNNLESFYQEMIMKKRLEEFQLMRGEPFASHSLVSATSVGDSGTAESPSLLQDKGKQAAQGKGPSLHVANVIDFSPEQCWTGPKKLTQPIEFVPEDEIQRNRLSEEEIRKIPMFSSYNPGEPNKVLYLKNLSPRVTERDLVSLFARFQEKKGPPIQFRMMTGRMRGQAFITFPNKEIAWQALHLVNGYKLHGKILVIEFGKNKKQRSNLQATSLISCATGSTTEISGS</sequence>
<gene>
    <name type="primary">RBM41</name>
</gene>
<feature type="chain" id="PRO_0000256267" description="RNA-binding protein 41">
    <location>
        <begin position="1"/>
        <end position="413"/>
    </location>
</feature>
<feature type="domain" description="RRM" evidence="1">
    <location>
        <begin position="309"/>
        <end position="387"/>
    </location>
</feature>
<feature type="region of interest" description="Disordered" evidence="2">
    <location>
        <begin position="223"/>
        <end position="247"/>
    </location>
</feature>
<feature type="compositionally biased region" description="Polar residues" evidence="2">
    <location>
        <begin position="223"/>
        <end position="235"/>
    </location>
</feature>
<feature type="modified residue" description="Phosphoserine" evidence="6">
    <location>
        <position position="232"/>
    </location>
</feature>
<feature type="splice variant" id="VSP_021346" description="In isoform 3." evidence="4">
    <original>Q</original>
    <variation>QAYHKKTSADKYMTSMKRKIKLGTK</variation>
    <location>
        <position position="174"/>
    </location>
</feature>
<feature type="splice variant" id="VSP_021347" description="In isoform 3." evidence="4">
    <original>EPFASHSLVSATSVGDSGTAESPSLLQDKGKQAAQGKGPSLHVANVIDFSPEQCWTGPKKLTQPIEFVPEDEIQRNR</original>
    <variation>LTSFPREDFQNLSYEGTTSVLGAKWQKRTGRTSTFSILLVSLLSETVFTSSAMYGIPHLLTMSLKFSTRIGKLSFTP</variation>
    <location>
        <begin position="211"/>
        <end position="287"/>
    </location>
</feature>
<feature type="splice variant" id="VSP_021348" description="In isoform 3." evidence="4">
    <location>
        <begin position="288"/>
        <end position="413"/>
    </location>
</feature>
<feature type="splice variant" id="VSP_021349" description="In isoform 2." evidence="4">
    <location>
        <begin position="406"/>
        <end position="413"/>
    </location>
</feature>
<feature type="sequence variant" id="VAR_028897" description="In dbSNP:rs17850127." evidence="3">
    <original>H</original>
    <variation>Y</variation>
    <location>
        <position position="376"/>
    </location>
</feature>
<feature type="sequence conflict" description="In Ref. 1; BAB14660." evidence="5" ref="1">
    <original>K</original>
    <variation>E</variation>
    <location>
        <position position="61"/>
    </location>
</feature>
<feature type="strand" evidence="7">
    <location>
        <begin position="291"/>
        <end position="293"/>
    </location>
</feature>
<feature type="strand" evidence="7">
    <location>
        <begin position="309"/>
        <end position="314"/>
    </location>
</feature>
<feature type="helix" evidence="7">
    <location>
        <begin position="322"/>
        <end position="328"/>
    </location>
</feature>
<feature type="helix" evidence="7">
    <location>
        <begin position="330"/>
        <end position="334"/>
    </location>
</feature>
<feature type="strand" evidence="7">
    <location>
        <begin position="335"/>
        <end position="338"/>
    </location>
</feature>
<feature type="strand" evidence="7">
    <location>
        <begin position="341"/>
        <end position="345"/>
    </location>
</feature>
<feature type="strand" evidence="7">
    <location>
        <begin position="347"/>
        <end position="349"/>
    </location>
</feature>
<feature type="strand" evidence="7">
    <location>
        <begin position="351"/>
        <end position="356"/>
    </location>
</feature>
<feature type="helix" evidence="7">
    <location>
        <begin position="360"/>
        <end position="369"/>
    </location>
</feature>
<feature type="strand" evidence="7">
    <location>
        <begin position="381"/>
        <end position="384"/>
    </location>
</feature>